<keyword id="KW-0963">Cytoplasm</keyword>
<keyword id="KW-0227">DNA damage</keyword>
<keyword id="KW-0234">DNA repair</keyword>
<keyword id="KW-0235">DNA replication</keyword>
<keyword id="KW-0238">DNA-binding</keyword>
<keyword id="KW-0239">DNA-directed DNA polymerase</keyword>
<keyword id="KW-0460">Magnesium</keyword>
<keyword id="KW-0479">Metal-binding</keyword>
<keyword id="KW-0515">Mutator protein</keyword>
<keyword id="KW-0548">Nucleotidyltransferase</keyword>
<keyword id="KW-0808">Transferase</keyword>
<sequence length="359" mass="39879">MRKIVHVDMDAFYASVEQRDDPGLRGKPVVVAWRGARSVVCAASYEARTFGIRSAMPAVRAERLCPNAIFVPPDFVRYKAVSRQVREIFHRHTDLVEPLSLDEAYLDVTQAKTGMQLATEIAQLIRTQIREETELTASAGIAPNKFLAKIASDWRKPDGQFVIAPSRIDAFLLPLKVNRIPGVGKVMDGKLAALGIVTVADLRLRPLEELQAHFGSFGQSLYRRARGIDERPVEPDQDVQSVSSEDTFSEDLALDALDTHILRLAEKTWLATRRTERIGRTVVLKLKTSNFRILTRSCTPEQPPVSQEALAQIALALTRRVELPAQTRYRLVGVGLSGFSNVEEGAVQGQLFGEIPQAE</sequence>
<dbReference type="EC" id="2.7.7.7" evidence="1"/>
<dbReference type="EMBL" id="AP008229">
    <property type="protein sequence ID" value="BAE67448.1"/>
    <property type="molecule type" value="Genomic_DNA"/>
</dbReference>
<dbReference type="RefSeq" id="WP_011407594.1">
    <property type="nucleotide sequence ID" value="NC_007705.1"/>
</dbReference>
<dbReference type="SMR" id="Q2P7M9"/>
<dbReference type="KEGG" id="xom:XOO0693"/>
<dbReference type="PATRIC" id="fig|291331.8.peg.850"/>
<dbReference type="HOGENOM" id="CLU_012348_1_2_6"/>
<dbReference type="GO" id="GO:0005829">
    <property type="term" value="C:cytosol"/>
    <property type="evidence" value="ECO:0007669"/>
    <property type="project" value="TreeGrafter"/>
</dbReference>
<dbReference type="GO" id="GO:0003684">
    <property type="term" value="F:damaged DNA binding"/>
    <property type="evidence" value="ECO:0007669"/>
    <property type="project" value="InterPro"/>
</dbReference>
<dbReference type="GO" id="GO:0003887">
    <property type="term" value="F:DNA-directed DNA polymerase activity"/>
    <property type="evidence" value="ECO:0007669"/>
    <property type="project" value="UniProtKB-UniRule"/>
</dbReference>
<dbReference type="GO" id="GO:0000287">
    <property type="term" value="F:magnesium ion binding"/>
    <property type="evidence" value="ECO:0007669"/>
    <property type="project" value="UniProtKB-UniRule"/>
</dbReference>
<dbReference type="GO" id="GO:0006261">
    <property type="term" value="P:DNA-templated DNA replication"/>
    <property type="evidence" value="ECO:0007669"/>
    <property type="project" value="UniProtKB-UniRule"/>
</dbReference>
<dbReference type="GO" id="GO:0042276">
    <property type="term" value="P:error-prone translesion synthesis"/>
    <property type="evidence" value="ECO:0007669"/>
    <property type="project" value="TreeGrafter"/>
</dbReference>
<dbReference type="GO" id="GO:0009432">
    <property type="term" value="P:SOS response"/>
    <property type="evidence" value="ECO:0007669"/>
    <property type="project" value="TreeGrafter"/>
</dbReference>
<dbReference type="CDD" id="cd03586">
    <property type="entry name" value="PolY_Pol_IV_kappa"/>
    <property type="match status" value="1"/>
</dbReference>
<dbReference type="FunFam" id="3.30.1490.100:FF:000004">
    <property type="entry name" value="DNA polymerase IV"/>
    <property type="match status" value="1"/>
</dbReference>
<dbReference type="FunFam" id="3.40.1170.60:FF:000001">
    <property type="entry name" value="DNA polymerase IV"/>
    <property type="match status" value="1"/>
</dbReference>
<dbReference type="Gene3D" id="3.30.70.270">
    <property type="match status" value="1"/>
</dbReference>
<dbReference type="Gene3D" id="3.40.1170.60">
    <property type="match status" value="1"/>
</dbReference>
<dbReference type="Gene3D" id="1.10.150.20">
    <property type="entry name" value="5' to 3' exonuclease, C-terminal subdomain"/>
    <property type="match status" value="1"/>
</dbReference>
<dbReference type="Gene3D" id="3.30.1490.100">
    <property type="entry name" value="DNA polymerase, Y-family, little finger domain"/>
    <property type="match status" value="1"/>
</dbReference>
<dbReference type="HAMAP" id="MF_01113">
    <property type="entry name" value="DNApol_IV"/>
    <property type="match status" value="1"/>
</dbReference>
<dbReference type="InterPro" id="IPR043502">
    <property type="entry name" value="DNA/RNA_pol_sf"/>
</dbReference>
<dbReference type="InterPro" id="IPR036775">
    <property type="entry name" value="DNA_pol_Y-fam_lit_finger_sf"/>
</dbReference>
<dbReference type="InterPro" id="IPR017961">
    <property type="entry name" value="DNA_pol_Y-fam_little_finger"/>
</dbReference>
<dbReference type="InterPro" id="IPR050116">
    <property type="entry name" value="DNA_polymerase-Y"/>
</dbReference>
<dbReference type="InterPro" id="IPR022880">
    <property type="entry name" value="DNApol_IV"/>
</dbReference>
<dbReference type="InterPro" id="IPR053848">
    <property type="entry name" value="IMS_HHH_1"/>
</dbReference>
<dbReference type="InterPro" id="IPR043128">
    <property type="entry name" value="Rev_trsase/Diguanyl_cyclase"/>
</dbReference>
<dbReference type="InterPro" id="IPR001126">
    <property type="entry name" value="UmuC"/>
</dbReference>
<dbReference type="NCBIfam" id="NF002677">
    <property type="entry name" value="PRK02406.1"/>
    <property type="match status" value="1"/>
</dbReference>
<dbReference type="PANTHER" id="PTHR11076:SF33">
    <property type="entry name" value="DNA POLYMERASE KAPPA"/>
    <property type="match status" value="1"/>
</dbReference>
<dbReference type="PANTHER" id="PTHR11076">
    <property type="entry name" value="DNA REPAIR POLYMERASE UMUC / TRANSFERASE FAMILY MEMBER"/>
    <property type="match status" value="1"/>
</dbReference>
<dbReference type="Pfam" id="PF00817">
    <property type="entry name" value="IMS"/>
    <property type="match status" value="1"/>
</dbReference>
<dbReference type="Pfam" id="PF11799">
    <property type="entry name" value="IMS_C"/>
    <property type="match status" value="1"/>
</dbReference>
<dbReference type="Pfam" id="PF21999">
    <property type="entry name" value="IMS_HHH_1"/>
    <property type="match status" value="1"/>
</dbReference>
<dbReference type="SUPFAM" id="SSF56672">
    <property type="entry name" value="DNA/RNA polymerases"/>
    <property type="match status" value="1"/>
</dbReference>
<dbReference type="SUPFAM" id="SSF100879">
    <property type="entry name" value="Lesion bypass DNA polymerase (Y-family), little finger domain"/>
    <property type="match status" value="1"/>
</dbReference>
<dbReference type="PROSITE" id="PS50173">
    <property type="entry name" value="UMUC"/>
    <property type="match status" value="1"/>
</dbReference>
<protein>
    <recommendedName>
        <fullName evidence="1">DNA polymerase IV</fullName>
        <shortName evidence="1">Pol IV</shortName>
        <ecNumber evidence="1">2.7.7.7</ecNumber>
    </recommendedName>
</protein>
<name>DPO4_XANOM</name>
<accession>Q2P7M9</accession>
<comment type="function">
    <text evidence="1">Poorly processive, error-prone DNA polymerase involved in untargeted mutagenesis. Copies undamaged DNA at stalled replication forks, which arise in vivo from mismatched or misaligned primer ends. These misaligned primers can be extended by PolIV. Exhibits no 3'-5' exonuclease (proofreading) activity. May be involved in translesional synthesis, in conjunction with the beta clamp from PolIII.</text>
</comment>
<comment type="catalytic activity">
    <reaction evidence="1">
        <text>DNA(n) + a 2'-deoxyribonucleoside 5'-triphosphate = DNA(n+1) + diphosphate</text>
        <dbReference type="Rhea" id="RHEA:22508"/>
        <dbReference type="Rhea" id="RHEA-COMP:17339"/>
        <dbReference type="Rhea" id="RHEA-COMP:17340"/>
        <dbReference type="ChEBI" id="CHEBI:33019"/>
        <dbReference type="ChEBI" id="CHEBI:61560"/>
        <dbReference type="ChEBI" id="CHEBI:173112"/>
        <dbReference type="EC" id="2.7.7.7"/>
    </reaction>
</comment>
<comment type="cofactor">
    <cofactor evidence="1">
        <name>Mg(2+)</name>
        <dbReference type="ChEBI" id="CHEBI:18420"/>
    </cofactor>
    <text evidence="1">Binds 2 magnesium ions per subunit.</text>
</comment>
<comment type="subunit">
    <text evidence="1">Monomer.</text>
</comment>
<comment type="subcellular location">
    <subcellularLocation>
        <location evidence="1">Cytoplasm</location>
    </subcellularLocation>
</comment>
<comment type="similarity">
    <text evidence="1">Belongs to the DNA polymerase type-Y family.</text>
</comment>
<evidence type="ECO:0000255" key="1">
    <source>
        <dbReference type="HAMAP-Rule" id="MF_01113"/>
    </source>
</evidence>
<gene>
    <name evidence="1" type="primary">dinB</name>
    <name type="ordered locus">XOO0693</name>
</gene>
<organism>
    <name type="scientific">Xanthomonas oryzae pv. oryzae (strain MAFF 311018)</name>
    <dbReference type="NCBI Taxonomy" id="342109"/>
    <lineage>
        <taxon>Bacteria</taxon>
        <taxon>Pseudomonadati</taxon>
        <taxon>Pseudomonadota</taxon>
        <taxon>Gammaproteobacteria</taxon>
        <taxon>Lysobacterales</taxon>
        <taxon>Lysobacteraceae</taxon>
        <taxon>Xanthomonas</taxon>
    </lineage>
</organism>
<reference key="1">
    <citation type="journal article" date="2005" name="Jpn. Agric. Res. Q.">
        <title>Genome sequence of Xanthomonas oryzae pv. oryzae suggests contribution of large numbers of effector genes and insertion sequences to its race diversity.</title>
        <authorList>
            <person name="Ochiai H."/>
            <person name="Inoue Y."/>
            <person name="Takeya M."/>
            <person name="Sasaki A."/>
            <person name="Kaku H."/>
        </authorList>
    </citation>
    <scope>NUCLEOTIDE SEQUENCE [LARGE SCALE GENOMIC DNA]</scope>
    <source>
        <strain>MAFF 311018</strain>
    </source>
</reference>
<proteinExistence type="inferred from homology"/>
<feature type="chain" id="PRO_1000084970" description="DNA polymerase IV">
    <location>
        <begin position="1"/>
        <end position="359"/>
    </location>
</feature>
<feature type="domain" description="UmuC" evidence="1">
    <location>
        <begin position="4"/>
        <end position="184"/>
    </location>
</feature>
<feature type="active site" evidence="1">
    <location>
        <position position="103"/>
    </location>
</feature>
<feature type="binding site" evidence="1">
    <location>
        <position position="8"/>
    </location>
    <ligand>
        <name>Mg(2+)</name>
        <dbReference type="ChEBI" id="CHEBI:18420"/>
    </ligand>
</feature>
<feature type="binding site" evidence="1">
    <location>
        <position position="102"/>
    </location>
    <ligand>
        <name>Mg(2+)</name>
        <dbReference type="ChEBI" id="CHEBI:18420"/>
    </ligand>
</feature>
<feature type="site" description="Substrate discrimination" evidence="1">
    <location>
        <position position="13"/>
    </location>
</feature>